<feature type="chain" id="PRO_1000056173" description="Bifunctional protein GlmU">
    <location>
        <begin position="1"/>
        <end position="497"/>
    </location>
</feature>
<feature type="region of interest" description="Pyrophosphorylase" evidence="1">
    <location>
        <begin position="1"/>
        <end position="243"/>
    </location>
</feature>
<feature type="region of interest" description="Linker" evidence="1">
    <location>
        <begin position="244"/>
        <end position="264"/>
    </location>
</feature>
<feature type="region of interest" description="N-acetyltransferase" evidence="1">
    <location>
        <begin position="265"/>
        <end position="497"/>
    </location>
</feature>
<feature type="region of interest" description="Disordered" evidence="2">
    <location>
        <begin position="473"/>
        <end position="497"/>
    </location>
</feature>
<feature type="compositionally biased region" description="Basic and acidic residues" evidence="2">
    <location>
        <begin position="488"/>
        <end position="497"/>
    </location>
</feature>
<feature type="active site" description="Proton acceptor" evidence="1">
    <location>
        <position position="376"/>
    </location>
</feature>
<feature type="binding site" evidence="1">
    <location>
        <begin position="16"/>
        <end position="19"/>
    </location>
    <ligand>
        <name>UDP-N-acetyl-alpha-D-glucosamine</name>
        <dbReference type="ChEBI" id="CHEBI:57705"/>
    </ligand>
</feature>
<feature type="binding site" evidence="1">
    <location>
        <position position="30"/>
    </location>
    <ligand>
        <name>UDP-N-acetyl-alpha-D-glucosamine</name>
        <dbReference type="ChEBI" id="CHEBI:57705"/>
    </ligand>
</feature>
<feature type="binding site" evidence="1">
    <location>
        <position position="87"/>
    </location>
    <ligand>
        <name>UDP-N-acetyl-alpha-D-glucosamine</name>
        <dbReference type="ChEBI" id="CHEBI:57705"/>
    </ligand>
</feature>
<feature type="binding site" evidence="1">
    <location>
        <begin position="92"/>
        <end position="93"/>
    </location>
    <ligand>
        <name>UDP-N-acetyl-alpha-D-glucosamine</name>
        <dbReference type="ChEBI" id="CHEBI:57705"/>
    </ligand>
</feature>
<feature type="binding site" evidence="1">
    <location>
        <position position="118"/>
    </location>
    <ligand>
        <name>Mg(2+)</name>
        <dbReference type="ChEBI" id="CHEBI:18420"/>
    </ligand>
</feature>
<feature type="binding site" evidence="1">
    <location>
        <position position="153"/>
    </location>
    <ligand>
        <name>UDP-N-acetyl-alpha-D-glucosamine</name>
        <dbReference type="ChEBI" id="CHEBI:57705"/>
    </ligand>
</feature>
<feature type="binding site" evidence="1">
    <location>
        <position position="168"/>
    </location>
    <ligand>
        <name>UDP-N-acetyl-alpha-D-glucosamine</name>
        <dbReference type="ChEBI" id="CHEBI:57705"/>
    </ligand>
</feature>
<feature type="binding site" evidence="1">
    <location>
        <position position="183"/>
    </location>
    <ligand>
        <name>UDP-N-acetyl-alpha-D-glucosamine</name>
        <dbReference type="ChEBI" id="CHEBI:57705"/>
    </ligand>
</feature>
<feature type="binding site" evidence="1">
    <location>
        <position position="241"/>
    </location>
    <ligand>
        <name>Mg(2+)</name>
        <dbReference type="ChEBI" id="CHEBI:18420"/>
    </ligand>
</feature>
<feature type="binding site" evidence="1">
    <location>
        <position position="241"/>
    </location>
    <ligand>
        <name>UDP-N-acetyl-alpha-D-glucosamine</name>
        <dbReference type="ChEBI" id="CHEBI:57705"/>
    </ligand>
</feature>
<feature type="binding site" evidence="1">
    <location>
        <position position="346"/>
    </location>
    <ligand>
        <name>UDP-N-acetyl-alpha-D-glucosamine</name>
        <dbReference type="ChEBI" id="CHEBI:57705"/>
    </ligand>
</feature>
<feature type="binding site" evidence="1">
    <location>
        <position position="364"/>
    </location>
    <ligand>
        <name>UDP-N-acetyl-alpha-D-glucosamine</name>
        <dbReference type="ChEBI" id="CHEBI:57705"/>
    </ligand>
</feature>
<feature type="binding site" evidence="1">
    <location>
        <position position="379"/>
    </location>
    <ligand>
        <name>UDP-N-acetyl-alpha-D-glucosamine</name>
        <dbReference type="ChEBI" id="CHEBI:57705"/>
    </ligand>
</feature>
<feature type="binding site" evidence="1">
    <location>
        <position position="390"/>
    </location>
    <ligand>
        <name>UDP-N-acetyl-alpha-D-glucosamine</name>
        <dbReference type="ChEBI" id="CHEBI:57705"/>
    </ligand>
</feature>
<feature type="binding site" evidence="1">
    <location>
        <position position="393"/>
    </location>
    <ligand>
        <name>acetyl-CoA</name>
        <dbReference type="ChEBI" id="CHEBI:57288"/>
    </ligand>
</feature>
<feature type="binding site" evidence="1">
    <location>
        <begin position="399"/>
        <end position="400"/>
    </location>
    <ligand>
        <name>acetyl-CoA</name>
        <dbReference type="ChEBI" id="CHEBI:57288"/>
    </ligand>
</feature>
<feature type="binding site" evidence="1">
    <location>
        <position position="418"/>
    </location>
    <ligand>
        <name>acetyl-CoA</name>
        <dbReference type="ChEBI" id="CHEBI:57288"/>
    </ligand>
</feature>
<feature type="binding site" evidence="1">
    <location>
        <position position="436"/>
    </location>
    <ligand>
        <name>acetyl-CoA</name>
        <dbReference type="ChEBI" id="CHEBI:57288"/>
    </ligand>
</feature>
<reference key="1">
    <citation type="submission" date="2007-02" db="EMBL/GenBank/DDBJ databases">
        <title>Complete sequence of Mycobacterium sp. JLS.</title>
        <authorList>
            <consortium name="US DOE Joint Genome Institute"/>
            <person name="Copeland A."/>
            <person name="Lucas S."/>
            <person name="Lapidus A."/>
            <person name="Barry K."/>
            <person name="Detter J.C."/>
            <person name="Glavina del Rio T."/>
            <person name="Hammon N."/>
            <person name="Israni S."/>
            <person name="Dalin E."/>
            <person name="Tice H."/>
            <person name="Pitluck S."/>
            <person name="Chain P."/>
            <person name="Malfatti S."/>
            <person name="Shin M."/>
            <person name="Vergez L."/>
            <person name="Schmutz J."/>
            <person name="Larimer F."/>
            <person name="Land M."/>
            <person name="Hauser L."/>
            <person name="Kyrpides N."/>
            <person name="Mikhailova N."/>
            <person name="Miller C.D."/>
            <person name="Anderson A.J."/>
            <person name="Sims R.C."/>
            <person name="Richardson P."/>
        </authorList>
    </citation>
    <scope>NUCLEOTIDE SEQUENCE [LARGE SCALE GENOMIC DNA]</scope>
    <source>
        <strain>JLS</strain>
    </source>
</reference>
<accession>A3Q5G5</accession>
<gene>
    <name evidence="1" type="primary">glmU</name>
    <name type="ordered locus">Mjls_4627</name>
</gene>
<name>GLMU_MYCSJ</name>
<protein>
    <recommendedName>
        <fullName evidence="1">Bifunctional protein GlmU</fullName>
    </recommendedName>
    <domain>
        <recommendedName>
            <fullName evidence="1">UDP-N-acetylglucosamine pyrophosphorylase</fullName>
            <ecNumber evidence="1">2.7.7.23</ecNumber>
        </recommendedName>
        <alternativeName>
            <fullName evidence="1">N-acetylglucosamine-1-phosphate uridyltransferase</fullName>
        </alternativeName>
    </domain>
    <domain>
        <recommendedName>
            <fullName evidence="1">Glucosamine-1-phosphate N-acetyltransferase</fullName>
            <ecNumber evidence="1">2.3.1.157</ecNumber>
        </recommendedName>
    </domain>
</protein>
<dbReference type="EC" id="2.7.7.23" evidence="1"/>
<dbReference type="EC" id="2.3.1.157" evidence="1"/>
<dbReference type="EMBL" id="CP000580">
    <property type="protein sequence ID" value="ABO00393.1"/>
    <property type="molecule type" value="Genomic_DNA"/>
</dbReference>
<dbReference type="SMR" id="A3Q5G5"/>
<dbReference type="KEGG" id="mjl:Mjls_4627"/>
<dbReference type="HOGENOM" id="CLU_029499_15_2_11"/>
<dbReference type="BioCyc" id="MSP164757:G1G8C-4668-MONOMER"/>
<dbReference type="UniPathway" id="UPA00113">
    <property type="reaction ID" value="UER00532"/>
</dbReference>
<dbReference type="UniPathway" id="UPA00113">
    <property type="reaction ID" value="UER00533"/>
</dbReference>
<dbReference type="UniPathway" id="UPA00973"/>
<dbReference type="GO" id="GO:0005737">
    <property type="term" value="C:cytoplasm"/>
    <property type="evidence" value="ECO:0007669"/>
    <property type="project" value="UniProtKB-SubCell"/>
</dbReference>
<dbReference type="GO" id="GO:0016020">
    <property type="term" value="C:membrane"/>
    <property type="evidence" value="ECO:0007669"/>
    <property type="project" value="GOC"/>
</dbReference>
<dbReference type="GO" id="GO:0019134">
    <property type="term" value="F:glucosamine-1-phosphate N-acetyltransferase activity"/>
    <property type="evidence" value="ECO:0007669"/>
    <property type="project" value="UniProtKB-UniRule"/>
</dbReference>
<dbReference type="GO" id="GO:0000287">
    <property type="term" value="F:magnesium ion binding"/>
    <property type="evidence" value="ECO:0007669"/>
    <property type="project" value="UniProtKB-UniRule"/>
</dbReference>
<dbReference type="GO" id="GO:0003977">
    <property type="term" value="F:UDP-N-acetylglucosamine diphosphorylase activity"/>
    <property type="evidence" value="ECO:0007669"/>
    <property type="project" value="UniProtKB-UniRule"/>
</dbReference>
<dbReference type="GO" id="GO:0000902">
    <property type="term" value="P:cell morphogenesis"/>
    <property type="evidence" value="ECO:0007669"/>
    <property type="project" value="UniProtKB-UniRule"/>
</dbReference>
<dbReference type="GO" id="GO:0071555">
    <property type="term" value="P:cell wall organization"/>
    <property type="evidence" value="ECO:0007669"/>
    <property type="project" value="UniProtKB-KW"/>
</dbReference>
<dbReference type="GO" id="GO:0009245">
    <property type="term" value="P:lipid A biosynthetic process"/>
    <property type="evidence" value="ECO:0007669"/>
    <property type="project" value="UniProtKB-UniRule"/>
</dbReference>
<dbReference type="GO" id="GO:0009252">
    <property type="term" value="P:peptidoglycan biosynthetic process"/>
    <property type="evidence" value="ECO:0007669"/>
    <property type="project" value="UniProtKB-UniRule"/>
</dbReference>
<dbReference type="GO" id="GO:0008360">
    <property type="term" value="P:regulation of cell shape"/>
    <property type="evidence" value="ECO:0007669"/>
    <property type="project" value="UniProtKB-KW"/>
</dbReference>
<dbReference type="GO" id="GO:0006048">
    <property type="term" value="P:UDP-N-acetylglucosamine biosynthetic process"/>
    <property type="evidence" value="ECO:0007669"/>
    <property type="project" value="UniProtKB-UniPathway"/>
</dbReference>
<dbReference type="CDD" id="cd02540">
    <property type="entry name" value="GT2_GlmU_N_bac"/>
    <property type="match status" value="1"/>
</dbReference>
<dbReference type="CDD" id="cd03353">
    <property type="entry name" value="LbH_GlmU_C"/>
    <property type="match status" value="1"/>
</dbReference>
<dbReference type="Gene3D" id="2.160.10.10">
    <property type="entry name" value="Hexapeptide repeat proteins"/>
    <property type="match status" value="1"/>
</dbReference>
<dbReference type="Gene3D" id="3.90.550.10">
    <property type="entry name" value="Spore Coat Polysaccharide Biosynthesis Protein SpsA, Chain A"/>
    <property type="match status" value="1"/>
</dbReference>
<dbReference type="HAMAP" id="MF_01631">
    <property type="entry name" value="GlmU"/>
    <property type="match status" value="1"/>
</dbReference>
<dbReference type="InterPro" id="IPR005882">
    <property type="entry name" value="Bifunctional_GlmU"/>
</dbReference>
<dbReference type="InterPro" id="IPR050065">
    <property type="entry name" value="GlmU-like"/>
</dbReference>
<dbReference type="InterPro" id="IPR038009">
    <property type="entry name" value="GlmU_C_LbH"/>
</dbReference>
<dbReference type="InterPro" id="IPR001451">
    <property type="entry name" value="Hexapep"/>
</dbReference>
<dbReference type="InterPro" id="IPR025877">
    <property type="entry name" value="MobA-like_NTP_Trfase"/>
</dbReference>
<dbReference type="InterPro" id="IPR029044">
    <property type="entry name" value="Nucleotide-diphossugar_trans"/>
</dbReference>
<dbReference type="InterPro" id="IPR011004">
    <property type="entry name" value="Trimer_LpxA-like_sf"/>
</dbReference>
<dbReference type="NCBIfam" id="TIGR01173">
    <property type="entry name" value="glmU"/>
    <property type="match status" value="1"/>
</dbReference>
<dbReference type="NCBIfam" id="NF010932">
    <property type="entry name" value="PRK14352.1"/>
    <property type="match status" value="1"/>
</dbReference>
<dbReference type="PANTHER" id="PTHR43584:SF3">
    <property type="entry name" value="BIFUNCTIONAL PROTEIN GLMU"/>
    <property type="match status" value="1"/>
</dbReference>
<dbReference type="PANTHER" id="PTHR43584">
    <property type="entry name" value="NUCLEOTIDYL TRANSFERASE"/>
    <property type="match status" value="1"/>
</dbReference>
<dbReference type="Pfam" id="PF00132">
    <property type="entry name" value="Hexapep"/>
    <property type="match status" value="1"/>
</dbReference>
<dbReference type="Pfam" id="PF12804">
    <property type="entry name" value="NTP_transf_3"/>
    <property type="match status" value="1"/>
</dbReference>
<dbReference type="SUPFAM" id="SSF53448">
    <property type="entry name" value="Nucleotide-diphospho-sugar transferases"/>
    <property type="match status" value="1"/>
</dbReference>
<dbReference type="SUPFAM" id="SSF51161">
    <property type="entry name" value="Trimeric LpxA-like enzymes"/>
    <property type="match status" value="1"/>
</dbReference>
<evidence type="ECO:0000255" key="1">
    <source>
        <dbReference type="HAMAP-Rule" id="MF_01631"/>
    </source>
</evidence>
<evidence type="ECO:0000256" key="2">
    <source>
        <dbReference type="SAM" id="MobiDB-lite"/>
    </source>
</evidence>
<keyword id="KW-0012">Acyltransferase</keyword>
<keyword id="KW-0133">Cell shape</keyword>
<keyword id="KW-0961">Cell wall biogenesis/degradation</keyword>
<keyword id="KW-0963">Cytoplasm</keyword>
<keyword id="KW-0460">Magnesium</keyword>
<keyword id="KW-0479">Metal-binding</keyword>
<keyword id="KW-0511">Multifunctional enzyme</keyword>
<keyword id="KW-0548">Nucleotidyltransferase</keyword>
<keyword id="KW-0573">Peptidoglycan synthesis</keyword>
<keyword id="KW-0677">Repeat</keyword>
<keyword id="KW-0808">Transferase</keyword>
<organism>
    <name type="scientific">Mycobacterium sp. (strain JLS)</name>
    <dbReference type="NCBI Taxonomy" id="164757"/>
    <lineage>
        <taxon>Bacteria</taxon>
        <taxon>Bacillati</taxon>
        <taxon>Actinomycetota</taxon>
        <taxon>Actinomycetes</taxon>
        <taxon>Mycobacteriales</taxon>
        <taxon>Mycobacteriaceae</taxon>
        <taxon>Mycobacterium</taxon>
    </lineage>
</organism>
<comment type="function">
    <text evidence="1">Catalyzes the last two sequential reactions in the de novo biosynthetic pathway for UDP-N-acetylglucosamine (UDP-GlcNAc). The C-terminal domain catalyzes the transfer of acetyl group from acetyl coenzyme A to glucosamine-1-phosphate (GlcN-1-P) to produce N-acetylglucosamine-1-phosphate (GlcNAc-1-P), which is converted into UDP-GlcNAc by the transfer of uridine 5-monophosphate (from uridine 5-triphosphate), a reaction catalyzed by the N-terminal domain.</text>
</comment>
<comment type="catalytic activity">
    <reaction evidence="1">
        <text>alpha-D-glucosamine 1-phosphate + acetyl-CoA = N-acetyl-alpha-D-glucosamine 1-phosphate + CoA + H(+)</text>
        <dbReference type="Rhea" id="RHEA:13725"/>
        <dbReference type="ChEBI" id="CHEBI:15378"/>
        <dbReference type="ChEBI" id="CHEBI:57287"/>
        <dbReference type="ChEBI" id="CHEBI:57288"/>
        <dbReference type="ChEBI" id="CHEBI:57776"/>
        <dbReference type="ChEBI" id="CHEBI:58516"/>
        <dbReference type="EC" id="2.3.1.157"/>
    </reaction>
</comment>
<comment type="catalytic activity">
    <reaction evidence="1">
        <text>N-acetyl-alpha-D-glucosamine 1-phosphate + UTP + H(+) = UDP-N-acetyl-alpha-D-glucosamine + diphosphate</text>
        <dbReference type="Rhea" id="RHEA:13509"/>
        <dbReference type="ChEBI" id="CHEBI:15378"/>
        <dbReference type="ChEBI" id="CHEBI:33019"/>
        <dbReference type="ChEBI" id="CHEBI:46398"/>
        <dbReference type="ChEBI" id="CHEBI:57705"/>
        <dbReference type="ChEBI" id="CHEBI:57776"/>
        <dbReference type="EC" id="2.7.7.23"/>
    </reaction>
</comment>
<comment type="cofactor">
    <cofactor evidence="1">
        <name>Mg(2+)</name>
        <dbReference type="ChEBI" id="CHEBI:18420"/>
    </cofactor>
    <text evidence="1">Binds 1 Mg(2+) ion per subunit.</text>
</comment>
<comment type="pathway">
    <text evidence="1">Nucleotide-sugar biosynthesis; UDP-N-acetyl-alpha-D-glucosamine biosynthesis; N-acetyl-alpha-D-glucosamine 1-phosphate from alpha-D-glucosamine 6-phosphate (route II): step 2/2.</text>
</comment>
<comment type="pathway">
    <text evidence="1">Nucleotide-sugar biosynthesis; UDP-N-acetyl-alpha-D-glucosamine biosynthesis; UDP-N-acetyl-alpha-D-glucosamine from N-acetyl-alpha-D-glucosamine 1-phosphate: step 1/1.</text>
</comment>
<comment type="pathway">
    <text evidence="1">Bacterial outer membrane biogenesis; LPS lipid A biosynthesis.</text>
</comment>
<comment type="subunit">
    <text evidence="1">Homotrimer.</text>
</comment>
<comment type="subcellular location">
    <subcellularLocation>
        <location evidence="1">Cytoplasm</location>
    </subcellularLocation>
</comment>
<comment type="similarity">
    <text evidence="1">In the N-terminal section; belongs to the N-acetylglucosamine-1-phosphate uridyltransferase family.</text>
</comment>
<comment type="similarity">
    <text evidence="1">In the C-terminal section; belongs to the transferase hexapeptide repeat family.</text>
</comment>
<sequence length="497" mass="51455">MTSSTTSSTDTAVLVLAAGAGTRMRSDIPKVLHTLGGRSMLAHALHTVAKVAPQHLVVVLGHDRERIAPAVEALATDLGRPIDVAIQDQQLGTGHAAECGLAALPEDFTGVVVVTAGDVPLLDADTMADLLATHGSAAATVLTTTVDDPTGYGRILRTQDNEVTSIVEQADASPSQRAIREVNAGVYAFDITALRSALRRLRSDNAQHELYLTDVIAIFRQDGLSVRARHVDDSALVAGVNDRVQLAALGAELNRRIVTAHQRAGVTVIDPGSTWIDVDVTIGRDTVIRPGTQLLGRTRVGGRCDVGPDTTLSDVTVGDGASVVRTHGSESLIGAGATVGPFTYLRPGTALGAEGKLGAFVETKNATIGAGTKVPHLTYVGDADIGEHSNIGASSVFVNYDGETKNRTTIGSHVRTGSDTMFVAPVTVGDGAYTGAGTVIRRNVPPGALAVSAGSQRNIEGWVVRKRPGSAAARAAERASGEAAEQALGHHDDSQGS</sequence>
<proteinExistence type="inferred from homology"/>